<sequence length="780" mass="79228">MSKMPAKKKSCFQITSVTTAQVATSITEDTESLDDPDESRTEDVSSEIFDVSRATDYGPEEVCERSSSEETLNNVGDAETPGTVSPNLLLDGQLAAAAAAPANGGGVVSARSVSGALASTLAAAATSAPAPGAPGGPQLAGSSAGPVTAAPSQPPTTCSSRFRVIKLDHGSGEPYRRGRWTCMEYYERDSDSSVLTRSGDCIRHSSTFDQTAERDSGLGATGGSVVVVVASMQGAHGPESGTDSSLTAVSQLPPSEKMSQPTPAQPQSFSVGQPQPPPPPVGGAVAQSSAPLPPFPGAATGPQPMMAAAQPSQPQGAGPGGQTLPPTNVTLAQPAMSLPPQPGPAVGAPAAQQPQQFAYPQPQIPPGHLLPVQPSGQSEYLQQHVAGLQPPSPAQPSSTGAAASPATAATLPVGTGQNASSVGAQLMGASSQPSEAMAPRTGPAQGGQVAPCQPTGVPPATVGGVVQPCLGPAGAGQPQSVPPPQMGGSGPLSAVPGGPHAVVPGVPNVPAAVPAPSVPSVSTTSVTMPNVPAPLAQSQQLSSHTPVSRSSSIIQHVGLPLAPGTHSAPTSLPQSDLSQFQTQTQPLVGQVDDTRRKSEPLPQPPLSLIAENKPVVKPPVADSLANPLQLTPMNSLATSVFSIAIPVDGDEDRNPSTAFYQAFHLNTLKESKSLWDSASGGGVVAIDNKIEQAMDLVKSHLMYAVREEVEVLKEQIKELVERNSLLERENALLKSLSSNDQLSQLPTQQANPGSTSQQQAVIAQPPQPTQPPQQPNVSSA</sequence>
<gene>
    <name evidence="7" type="primary">TSC22D2</name>
    <name evidence="7" type="synonym">KIAA0669</name>
    <name evidence="7" type="synonym">TILZ4</name>
</gene>
<dbReference type="EMBL" id="AB014569">
    <property type="protein sequence ID" value="BAA31644.2"/>
    <property type="status" value="ALT_INIT"/>
    <property type="molecule type" value="mRNA"/>
</dbReference>
<dbReference type="EMBL" id="CH471052">
    <property type="protein sequence ID" value="EAW78838.1"/>
    <property type="molecule type" value="Genomic_DNA"/>
</dbReference>
<dbReference type="EMBL" id="CH471052">
    <property type="protein sequence ID" value="EAW78839.1"/>
    <property type="molecule type" value="Genomic_DNA"/>
</dbReference>
<dbReference type="EMBL" id="BC044643">
    <property type="protein sequence ID" value="AAH44643.1"/>
    <property type="molecule type" value="mRNA"/>
</dbReference>
<dbReference type="EMBL" id="AF201290">
    <property type="protein sequence ID" value="AAG41223.1"/>
    <property type="molecule type" value="mRNA"/>
</dbReference>
<dbReference type="EMBL" id="AF201291">
    <property type="protein sequence ID" value="AAG41224.1"/>
    <property type="molecule type" value="mRNA"/>
</dbReference>
<dbReference type="EMBL" id="AF201292">
    <property type="protein sequence ID" value="AAG41225.1"/>
    <property type="molecule type" value="mRNA"/>
</dbReference>
<dbReference type="CCDS" id="CCDS3149.1">
    <molecule id="O75157-1"/>
</dbReference>
<dbReference type="CCDS" id="CCDS93406.1">
    <molecule id="O75157-2"/>
</dbReference>
<dbReference type="PIR" id="T00366">
    <property type="entry name" value="T00366"/>
</dbReference>
<dbReference type="RefSeq" id="NP_001290193.1">
    <molecule id="O75157-2"/>
    <property type="nucleotide sequence ID" value="NM_001303264.2"/>
</dbReference>
<dbReference type="RefSeq" id="NP_055594.1">
    <molecule id="O75157-1"/>
    <property type="nucleotide sequence ID" value="NM_014779.4"/>
</dbReference>
<dbReference type="SMR" id="O75157"/>
<dbReference type="BioGRID" id="115158">
    <property type="interactions" value="66"/>
</dbReference>
<dbReference type="FunCoup" id="O75157">
    <property type="interactions" value="1673"/>
</dbReference>
<dbReference type="IntAct" id="O75157">
    <property type="interactions" value="15"/>
</dbReference>
<dbReference type="STRING" id="9606.ENSP00000354543"/>
<dbReference type="GlyCosmos" id="O75157">
    <property type="glycosylation" value="9 sites, 2 glycans"/>
</dbReference>
<dbReference type="GlyGen" id="O75157">
    <property type="glycosylation" value="11 sites, 2 O-linked glycans (9 sites)"/>
</dbReference>
<dbReference type="iPTMnet" id="O75157"/>
<dbReference type="MetOSite" id="O75157"/>
<dbReference type="PhosphoSitePlus" id="O75157"/>
<dbReference type="BioMuta" id="TSC22D2"/>
<dbReference type="jPOST" id="O75157"/>
<dbReference type="MassIVE" id="O75157"/>
<dbReference type="PaxDb" id="9606-ENSP00000354543"/>
<dbReference type="PeptideAtlas" id="O75157"/>
<dbReference type="ProteomicsDB" id="49825">
    <molecule id="O75157-1"/>
</dbReference>
<dbReference type="ProteomicsDB" id="49826">
    <molecule id="O75157-2"/>
</dbReference>
<dbReference type="Pumba" id="O75157"/>
<dbReference type="Antibodypedia" id="1698">
    <property type="antibodies" value="154 antibodies from 23 providers"/>
</dbReference>
<dbReference type="DNASU" id="9819"/>
<dbReference type="Ensembl" id="ENST00000361875.8">
    <molecule id="O75157-1"/>
    <property type="protein sequence ID" value="ENSP00000354543.2"/>
    <property type="gene ID" value="ENSG00000196428.13"/>
</dbReference>
<dbReference type="Ensembl" id="ENST00000688009.1">
    <molecule id="O75157-2"/>
    <property type="protein sequence ID" value="ENSP00000510392.1"/>
    <property type="gene ID" value="ENSG00000196428.13"/>
</dbReference>
<dbReference type="GeneID" id="9819"/>
<dbReference type="KEGG" id="hsa:9819"/>
<dbReference type="MANE-Select" id="ENST00000688009.1">
    <molecule id="O75157-2"/>
    <property type="protein sequence ID" value="ENSP00000510392.1"/>
    <property type="RefSeq nucleotide sequence ID" value="NM_001303264.2"/>
    <property type="RefSeq protein sequence ID" value="NP_001290193.1"/>
</dbReference>
<dbReference type="UCSC" id="uc003exv.4">
    <molecule id="O75157-1"/>
    <property type="organism name" value="human"/>
</dbReference>
<dbReference type="AGR" id="HGNC:29095"/>
<dbReference type="CTD" id="9819"/>
<dbReference type="DisGeNET" id="9819"/>
<dbReference type="GeneCards" id="TSC22D2"/>
<dbReference type="HGNC" id="HGNC:29095">
    <property type="gene designation" value="TSC22D2"/>
</dbReference>
<dbReference type="HPA" id="ENSG00000196428">
    <property type="expression patterns" value="Low tissue specificity"/>
</dbReference>
<dbReference type="MIM" id="617724">
    <property type="type" value="gene"/>
</dbReference>
<dbReference type="neXtProt" id="NX_O75157"/>
<dbReference type="OpenTargets" id="ENSG00000196428"/>
<dbReference type="PharmGKB" id="PA142670697"/>
<dbReference type="VEuPathDB" id="HostDB:ENSG00000196428"/>
<dbReference type="eggNOG" id="KOG4797">
    <property type="taxonomic scope" value="Eukaryota"/>
</dbReference>
<dbReference type="GeneTree" id="ENSGT00940000160465"/>
<dbReference type="HOGENOM" id="CLU_020315_0_0_1"/>
<dbReference type="InParanoid" id="O75157"/>
<dbReference type="OMA" id="TFYQVFH"/>
<dbReference type="OrthoDB" id="8961796at2759"/>
<dbReference type="PAN-GO" id="O75157">
    <property type="GO annotations" value="0 GO annotations based on evolutionary models"/>
</dbReference>
<dbReference type="PhylomeDB" id="O75157"/>
<dbReference type="TreeFam" id="TF318837"/>
<dbReference type="PathwayCommons" id="O75157"/>
<dbReference type="SignaLink" id="O75157"/>
<dbReference type="BioGRID-ORCS" id="9819">
    <property type="hits" value="227 hits in 1186 CRISPR screens"/>
</dbReference>
<dbReference type="ChiTaRS" id="TSC22D2">
    <property type="organism name" value="human"/>
</dbReference>
<dbReference type="GenomeRNAi" id="9819"/>
<dbReference type="Pharos" id="O75157">
    <property type="development level" value="Tdark"/>
</dbReference>
<dbReference type="PRO" id="PR:O75157"/>
<dbReference type="Proteomes" id="UP000005640">
    <property type="component" value="Chromosome 3"/>
</dbReference>
<dbReference type="RNAct" id="O75157">
    <property type="molecule type" value="protein"/>
</dbReference>
<dbReference type="Bgee" id="ENSG00000196428">
    <property type="expression patterns" value="Expressed in buccal mucosa cell and 209 other cell types or tissues"/>
</dbReference>
<dbReference type="ExpressionAtlas" id="O75157">
    <property type="expression patterns" value="baseline and differential"/>
</dbReference>
<dbReference type="GO" id="GO:0045786">
    <property type="term" value="P:negative regulation of cell cycle"/>
    <property type="evidence" value="ECO:0000315"/>
    <property type="project" value="UniProtKB"/>
</dbReference>
<dbReference type="GO" id="GO:0006357">
    <property type="term" value="P:regulation of transcription by RNA polymerase II"/>
    <property type="evidence" value="ECO:0007669"/>
    <property type="project" value="InterPro"/>
</dbReference>
<dbReference type="GO" id="GO:0006970">
    <property type="term" value="P:response to osmotic stress"/>
    <property type="evidence" value="ECO:0007669"/>
    <property type="project" value="Ensembl"/>
</dbReference>
<dbReference type="CDD" id="cd21939">
    <property type="entry name" value="ZIP_TSC22D2"/>
    <property type="match status" value="1"/>
</dbReference>
<dbReference type="FunFam" id="1.20.5.490:FF:000002">
    <property type="entry name" value="TSC22 domain family, member 1"/>
    <property type="match status" value="1"/>
</dbReference>
<dbReference type="Gene3D" id="1.20.5.490">
    <property type="entry name" value="Single helix bin"/>
    <property type="match status" value="1"/>
</dbReference>
<dbReference type="InterPro" id="IPR000580">
    <property type="entry name" value="TSC22/Bun"/>
</dbReference>
<dbReference type="InterPro" id="IPR047862">
    <property type="entry name" value="TSC22/BUN_CS"/>
</dbReference>
<dbReference type="InterPro" id="IPR053049">
    <property type="entry name" value="TSC22_domain_protein_2"/>
</dbReference>
<dbReference type="PANTHER" id="PTHR46894">
    <property type="entry name" value="TSC22 DOMAIN FAMILY PROTEIN 2"/>
    <property type="match status" value="1"/>
</dbReference>
<dbReference type="PANTHER" id="PTHR46894:SF1">
    <property type="entry name" value="TSC22 DOMAIN FAMILY PROTEIN 2"/>
    <property type="match status" value="1"/>
</dbReference>
<dbReference type="Pfam" id="PF01166">
    <property type="entry name" value="TSC22"/>
    <property type="match status" value="1"/>
</dbReference>
<dbReference type="SUPFAM" id="SSF58026">
    <property type="entry name" value="Delta-sleep-inducing peptide immunoreactive peptide"/>
    <property type="match status" value="1"/>
</dbReference>
<dbReference type="PROSITE" id="PS01289">
    <property type="entry name" value="TSC22"/>
    <property type="match status" value="1"/>
</dbReference>
<evidence type="ECO:0000256" key="1">
    <source>
        <dbReference type="SAM" id="MobiDB-lite"/>
    </source>
</evidence>
<evidence type="ECO:0000269" key="2">
    <source>
    </source>
</evidence>
<evidence type="ECO:0000269" key="3">
    <source>
    </source>
</evidence>
<evidence type="ECO:0000269" key="4">
    <source>
    </source>
</evidence>
<evidence type="ECO:0000303" key="5">
    <source ref="4"/>
</evidence>
<evidence type="ECO:0000305" key="6"/>
<evidence type="ECO:0000312" key="7">
    <source>
        <dbReference type="HGNC" id="HGNC:29095"/>
    </source>
</evidence>
<keyword id="KW-0025">Alternative splicing</keyword>
<keyword id="KW-1267">Proteomics identification</keyword>
<keyword id="KW-1185">Reference proteome</keyword>
<comment type="function">
    <text evidence="4">Reduces the level of nuclear PKM isoform M2 which results in repression of cyclin CCND1 transcription and reduced cell growth.</text>
</comment>
<comment type="subunit">
    <text evidence="2 3 4">Interacts with NRBP1 (PubMed:22510880). Interacts with PKM isoform M2; the interaction results in reduced nuclear levels of PKM isoform M2, leading to repression of cyclin CCND1 transcription and reduced cell growth (PubMed:27573352). Interacts with WDR77 (PubMed:27337956).</text>
</comment>
<comment type="alternative products">
    <event type="alternative splicing"/>
    <isoform>
        <id>O75157-1</id>
        <name>1</name>
        <name>TILZ4a</name>
        <name>TILZ4c</name>
        <sequence type="displayed"/>
    </isoform>
    <isoform>
        <id>O75157-2</id>
        <name>2</name>
        <name>TILZ4b</name>
        <sequence type="described" ref="VSP_013202"/>
    </isoform>
</comment>
<comment type="miscellaneous">
    <text evidence="4">May be involved in the loss of cell cycle regulation in colorectal tumors, expression is shown to be decreased in the majority of tumors.</text>
</comment>
<comment type="similarity">
    <text evidence="6">Belongs to the TSC-22/Dip/Bun family.</text>
</comment>
<comment type="sequence caution" evidence="6">
    <conflict type="erroneous initiation">
        <sequence resource="EMBL-CDS" id="BAA31644"/>
    </conflict>
</comment>
<organism>
    <name type="scientific">Homo sapiens</name>
    <name type="common">Human</name>
    <dbReference type="NCBI Taxonomy" id="9606"/>
    <lineage>
        <taxon>Eukaryota</taxon>
        <taxon>Metazoa</taxon>
        <taxon>Chordata</taxon>
        <taxon>Craniata</taxon>
        <taxon>Vertebrata</taxon>
        <taxon>Euteleostomi</taxon>
        <taxon>Mammalia</taxon>
        <taxon>Eutheria</taxon>
        <taxon>Euarchontoglires</taxon>
        <taxon>Primates</taxon>
        <taxon>Haplorrhini</taxon>
        <taxon>Catarrhini</taxon>
        <taxon>Hominidae</taxon>
        <taxon>Homo</taxon>
    </lineage>
</organism>
<protein>
    <recommendedName>
        <fullName evidence="7">TSC22 domain family protein 2</fullName>
    </recommendedName>
    <alternativeName>
        <fullName>TSC22-related-inducible leucine zipper protein 4</fullName>
    </alternativeName>
</protein>
<feature type="chain" id="PRO_0000219369" description="TSC22 domain family protein 2">
    <location>
        <begin position="1"/>
        <end position="780"/>
    </location>
</feature>
<feature type="region of interest" description="Disordered" evidence="1">
    <location>
        <begin position="20"/>
        <end position="86"/>
    </location>
</feature>
<feature type="region of interest" description="Disordered" evidence="1">
    <location>
        <begin position="126"/>
        <end position="158"/>
    </location>
</feature>
<feature type="region of interest" description="Disordered" evidence="1">
    <location>
        <begin position="235"/>
        <end position="499"/>
    </location>
</feature>
<feature type="region of interest" description="Disordered" evidence="1">
    <location>
        <begin position="587"/>
        <end position="607"/>
    </location>
</feature>
<feature type="region of interest" description="Disordered" evidence="1">
    <location>
        <begin position="736"/>
        <end position="780"/>
    </location>
</feature>
<feature type="compositionally biased region" description="Acidic residues" evidence="1">
    <location>
        <begin position="28"/>
        <end position="37"/>
    </location>
</feature>
<feature type="compositionally biased region" description="Low complexity" evidence="1">
    <location>
        <begin position="126"/>
        <end position="146"/>
    </location>
</feature>
<feature type="compositionally biased region" description="Polar residues" evidence="1">
    <location>
        <begin position="241"/>
        <end position="262"/>
    </location>
</feature>
<feature type="compositionally biased region" description="Low complexity" evidence="1">
    <location>
        <begin position="297"/>
        <end position="316"/>
    </location>
</feature>
<feature type="compositionally biased region" description="Low complexity" evidence="1">
    <location>
        <begin position="344"/>
        <end position="361"/>
    </location>
</feature>
<feature type="compositionally biased region" description="Low complexity" evidence="1">
    <location>
        <begin position="395"/>
        <end position="412"/>
    </location>
</feature>
<feature type="compositionally biased region" description="Polar residues" evidence="1">
    <location>
        <begin position="415"/>
        <end position="434"/>
    </location>
</feature>
<feature type="compositionally biased region" description="Low complexity" evidence="1">
    <location>
        <begin position="453"/>
        <end position="468"/>
    </location>
</feature>
<feature type="compositionally biased region" description="Polar residues" evidence="1">
    <location>
        <begin position="736"/>
        <end position="756"/>
    </location>
</feature>
<feature type="compositionally biased region" description="Pro residues" evidence="1">
    <location>
        <begin position="765"/>
        <end position="774"/>
    </location>
</feature>
<feature type="splice variant" id="VSP_013202" description="In isoform 2." evidence="5">
    <location>
        <begin position="653"/>
        <end position="676"/>
    </location>
</feature>
<feature type="sequence variant" id="VAR_052408" description="In dbSNP:rs879634.">
    <original>A</original>
    <variation>T</variation>
    <location>
        <position position="419"/>
    </location>
</feature>
<reference key="1">
    <citation type="journal article" date="1998" name="DNA Res.">
        <title>Prediction of the coding sequences of unidentified human genes. X. The complete sequences of 100 new cDNA clones from brain which can code for large proteins in vitro.</title>
        <authorList>
            <person name="Ishikawa K."/>
            <person name="Nagase T."/>
            <person name="Suyama M."/>
            <person name="Miyajima N."/>
            <person name="Tanaka A."/>
            <person name="Kotani H."/>
            <person name="Nomura N."/>
            <person name="Ohara O."/>
        </authorList>
    </citation>
    <scope>NUCLEOTIDE SEQUENCE [LARGE SCALE MRNA] (ISOFORM 1)</scope>
    <source>
        <tissue>Brain</tissue>
    </source>
</reference>
<reference key="2">
    <citation type="submission" date="2005-09" db="EMBL/GenBank/DDBJ databases">
        <authorList>
            <person name="Mural R.J."/>
            <person name="Istrail S."/>
            <person name="Sutton G.G."/>
            <person name="Florea L."/>
            <person name="Halpern A.L."/>
            <person name="Mobarry C.M."/>
            <person name="Lippert R."/>
            <person name="Walenz B."/>
            <person name="Shatkay H."/>
            <person name="Dew I."/>
            <person name="Miller J.R."/>
            <person name="Flanigan M.J."/>
            <person name="Edwards N.J."/>
            <person name="Bolanos R."/>
            <person name="Fasulo D."/>
            <person name="Halldorsson B.V."/>
            <person name="Hannenhalli S."/>
            <person name="Turner R."/>
            <person name="Yooseph S."/>
            <person name="Lu F."/>
            <person name="Nusskern D.R."/>
            <person name="Shue B.C."/>
            <person name="Zheng X.H."/>
            <person name="Zhong F."/>
            <person name="Delcher A.L."/>
            <person name="Huson D.H."/>
            <person name="Kravitz S.A."/>
            <person name="Mouchard L."/>
            <person name="Reinert K."/>
            <person name="Remington K.A."/>
            <person name="Clark A.G."/>
            <person name="Waterman M.S."/>
            <person name="Eichler E.E."/>
            <person name="Adams M.D."/>
            <person name="Hunkapiller M.W."/>
            <person name="Myers E.W."/>
            <person name="Venter J.C."/>
        </authorList>
    </citation>
    <scope>NUCLEOTIDE SEQUENCE [LARGE SCALE GENOMIC DNA]</scope>
</reference>
<reference key="3">
    <citation type="journal article" date="2004" name="Genome Res.">
        <title>The status, quality, and expansion of the NIH full-length cDNA project: the Mammalian Gene Collection (MGC).</title>
        <authorList>
            <consortium name="The MGC Project Team"/>
        </authorList>
    </citation>
    <scope>NUCLEOTIDE SEQUENCE [LARGE SCALE MRNA] (ISOFORM 1)</scope>
    <source>
        <tissue>Brain</tissue>
    </source>
</reference>
<reference key="4">
    <citation type="submission" date="1999-11" db="EMBL/GenBank/DDBJ databases">
        <title>Identification and characterization of a family of leucine zipper genes related to TSC22.</title>
        <authorList>
            <person name="Ershler M.A."/>
            <person name="Belyavsky A.V."/>
            <person name="Visser J.W.M."/>
        </authorList>
    </citation>
    <scope>NUCLEOTIDE SEQUENCE [MRNA] OF 544-780 (ISOFORMS 1 AND 2)</scope>
</reference>
<reference key="5">
    <citation type="journal article" date="2008" name="Proc. Natl. Acad. Sci. U.S.A.">
        <title>A quantitative atlas of mitotic phosphorylation.</title>
        <authorList>
            <person name="Dephoure N."/>
            <person name="Zhou C."/>
            <person name="Villen J."/>
            <person name="Beausoleil S.A."/>
            <person name="Bakalarski C.E."/>
            <person name="Elledge S.J."/>
            <person name="Gygi S.P."/>
        </authorList>
    </citation>
    <scope>IDENTIFICATION BY MASS SPECTROMETRY [LARGE SCALE ANALYSIS]</scope>
    <source>
        <tissue>Cervix carcinoma</tissue>
    </source>
</reference>
<reference key="6">
    <citation type="journal article" date="2009" name="Anal. Chem.">
        <title>Lys-N and trypsin cover complementary parts of the phosphoproteome in a refined SCX-based approach.</title>
        <authorList>
            <person name="Gauci S."/>
            <person name="Helbig A.O."/>
            <person name="Slijper M."/>
            <person name="Krijgsveld J."/>
            <person name="Heck A.J."/>
            <person name="Mohammed S."/>
        </authorList>
    </citation>
    <scope>IDENTIFICATION BY MASS SPECTROMETRY [LARGE SCALE ANALYSIS]</scope>
</reference>
<reference key="7">
    <citation type="journal article" date="2011" name="BMC Syst. Biol.">
        <title>Initial characterization of the human central proteome.</title>
        <authorList>
            <person name="Burkard T.R."/>
            <person name="Planyavsky M."/>
            <person name="Kaupe I."/>
            <person name="Breitwieser F.P."/>
            <person name="Buerckstuemmer T."/>
            <person name="Bennett K.L."/>
            <person name="Superti-Furga G."/>
            <person name="Colinge J."/>
        </authorList>
    </citation>
    <scope>IDENTIFICATION BY MASS SPECTROMETRY [LARGE SCALE ANALYSIS]</scope>
</reference>
<reference key="8">
    <citation type="journal article" date="2012" name="EMBO J.">
        <title>Nuclear receptor binding protein 1 regulates intestinal progenitor cell homeostasis and tumour formation.</title>
        <authorList>
            <person name="Wilson C.H."/>
            <person name="Crombie C."/>
            <person name="van der Weyden L."/>
            <person name="Poulogiannis G."/>
            <person name="Rust A.G."/>
            <person name="Pardo M."/>
            <person name="Gracia T."/>
            <person name="Yu L."/>
            <person name="Choudhary J."/>
            <person name="Poulin G.B."/>
            <person name="McIntyre R.E."/>
            <person name="Winton D.J."/>
            <person name="March H.N."/>
            <person name="Arends M.J."/>
            <person name="Fraser A.G."/>
            <person name="Adams D.J."/>
        </authorList>
    </citation>
    <scope>INTERACTION WITH NRBP1</scope>
</reference>
<reference key="9">
    <citation type="journal article" date="2014" name="J. Proteomics">
        <title>An enzyme assisted RP-RPLC approach for in-depth analysis of human liver phosphoproteome.</title>
        <authorList>
            <person name="Bian Y."/>
            <person name="Song C."/>
            <person name="Cheng K."/>
            <person name="Dong M."/>
            <person name="Wang F."/>
            <person name="Huang J."/>
            <person name="Sun D."/>
            <person name="Wang L."/>
            <person name="Ye M."/>
            <person name="Zou H."/>
        </authorList>
    </citation>
    <scope>IDENTIFICATION BY MASS SPECTROMETRY [LARGE SCALE ANALYSIS]</scope>
    <source>
        <tissue>Liver</tissue>
    </source>
</reference>
<reference key="10">
    <citation type="journal article" date="2016" name="Int. J. Oncol.">
        <title>TSC22D2 interacts with PKM2 and inhibits cell growth in colorectal cancer.</title>
        <authorList>
            <person name="Liang F."/>
            <person name="Li Q."/>
            <person name="Li X."/>
            <person name="Li Z."/>
            <person name="Gong Z."/>
            <person name="Deng H."/>
            <person name="Xiang B."/>
            <person name="Zhou M."/>
            <person name="Li X."/>
            <person name="Li G."/>
            <person name="Zeng Z."/>
            <person name="Xiong W."/>
        </authorList>
    </citation>
    <scope>FUNCTION</scope>
    <scope>INTERACTION WITH PKM</scope>
</reference>
<reference key="11">
    <citation type="journal article" date="2016" name="Tumor Biol.">
        <title>Yeast two-hybrid screening identified WDR77 as a novel interacting partner of TSC22D2.</title>
        <authorList>
            <person name="Li Q."/>
            <person name="Chen P."/>
            <person name="Zeng Z."/>
            <person name="Liang F."/>
            <person name="Song Y."/>
            <person name="Xiong F."/>
            <person name="Li X."/>
            <person name="Gong Z."/>
            <person name="Zhou M."/>
            <person name="Xiang B."/>
            <person name="Peng C."/>
            <person name="Li X."/>
            <person name="Chen X."/>
            <person name="Li G."/>
            <person name="Xiong W."/>
        </authorList>
    </citation>
    <scope>INTERACTION WITH WDR77</scope>
</reference>
<accession>O75157</accession>
<accession>D3DNI5</accession>
<accession>Q6PI50</accession>
<accession>Q9H2Z6</accession>
<accession>Q9H2Z7</accession>
<accession>Q9H2Z8</accession>
<name>T22D2_HUMAN</name>
<proteinExistence type="evidence at protein level"/>